<keyword id="KW-0002">3D-structure</keyword>
<keyword id="KW-0167">Capsid protein</keyword>
<keyword id="KW-1035">Host cytoplasm</keyword>
<keyword id="KW-1185">Reference proteome</keyword>
<keyword id="KW-1140">T=1 icosahedral capsid protein</keyword>
<keyword id="KW-0946">Virion</keyword>
<name>CAPSD_SPV4</name>
<protein>
    <recommendedName>
        <fullName>Capsid protein VP1</fullName>
    </recommendedName>
    <alternativeName>
        <fullName>VP1</fullName>
    </alternativeName>
</protein>
<accession>P11333</accession>
<gene>
    <name type="ORF">ORF1</name>
</gene>
<proteinExistence type="evidence at protein level"/>
<organism>
    <name type="scientific">Spiroplasma virus 4</name>
    <name type="common">SpV4</name>
    <dbReference type="NCBI Taxonomy" id="2928746"/>
    <lineage>
        <taxon>Viruses</taxon>
        <taxon>Monodnaviria</taxon>
        <taxon>Sangervirae</taxon>
        <taxon>Phixviricota</taxon>
        <taxon>Malgrandaviricetes</taxon>
        <taxon>Petitvirales</taxon>
        <taxon>Microviridae</taxon>
        <taxon>Gokushovirinae</taxon>
        <taxon>Spiromicrovirus</taxon>
        <taxon>Spiromicrovirus SpV4</taxon>
    </lineage>
</organism>
<sequence length="553" mass="62220">MKKKMSKLNARVHDFSMFKGNHIPRSKIHIPHKTIRAFNVGEIIPIYQTPVYPGEHIKMDLTSLYRPSTFIVPPMDDLIVDTYAFAVPWRIVWKDLEKFFGENSDSWDVKNAPPVPDIVAPSGGWDYGTLADHFGITPKVPGIRVKSLRFRAYAKIINDWFRDQNLSSECALTLDSSNSQGSNGSNQVTDIQLGGKPYIANKYHDYFTSCLPAPQKGAPTTLNVGGMAPVTTKFRDVPNLSGTPLIFRDNKGRTIKTGQLGIGPVDAGFLVAQNTAQAANGERAIPSNLWADLSNATGISISDLRLAITYQHYKEMDARGGTRYVEFTLNHFGVHTADARLQRSEFLGGHSQSLLVQSVPQTSSTVEKMTPQGNLAAFSETMIQNNYLVNKTFTEHSYIIVLAVVRYKHTYQQGIEADWFRGQDKFDMYDPLLANISEQPVKNREIMVQGNSQDNEIFGFQEAWADLRFKPNSVAGVMRSSHPQSLDYWHFADHYAQLPKLSSEWLKEDYKNVDRTLALKASDNTPQLRVDFMFNTIAEKPMPLYSTPGLRRI</sequence>
<comment type="function">
    <text evidence="1">Assembles to form an icosahedral capsid with a T=1 symmetry.</text>
</comment>
<comment type="subcellular location">
    <subcellularLocation>
        <location>Virion</location>
    </subcellularLocation>
    <subcellularLocation>
        <location evidence="1">Host cytoplasm</location>
    </subcellularLocation>
</comment>
<comment type="similarity">
    <text evidence="2">Belongs to the microviridae F protein family.</text>
</comment>
<feature type="chain" id="PRO_0000065788" description="Capsid protein VP1">
    <location>
        <begin position="1"/>
        <end position="553"/>
    </location>
</feature>
<dbReference type="EMBL" id="M17988">
    <property type="protein sequence ID" value="AAA72621.1"/>
    <property type="molecule type" value="Genomic_DNA"/>
</dbReference>
<dbReference type="PIR" id="F29825">
    <property type="entry name" value="G1BPSV"/>
</dbReference>
<dbReference type="RefSeq" id="NP_598320.1">
    <property type="nucleotide sequence ID" value="NC_003438.1"/>
</dbReference>
<dbReference type="PDB" id="1KVP">
    <property type="method" value="EM"/>
    <property type="resolution" value="27.00 A"/>
    <property type="chains" value="A=226-297"/>
</dbReference>
<dbReference type="PDB" id="9CGM">
    <property type="method" value="EM"/>
    <property type="resolution" value="2.52 A"/>
    <property type="chains" value="1/2/3/4/5/6/7/8/A/B/C/D/E/F/G/H/I/J/K/L/M/N/O/P/Q/R/S/T/U/V=1-553"/>
</dbReference>
<dbReference type="PDBsum" id="1KVP"/>
<dbReference type="PDBsum" id="9CGM"/>
<dbReference type="EMDB" id="EMD-45583"/>
<dbReference type="SMR" id="P11333"/>
<dbReference type="KEGG" id="vg:76971138"/>
<dbReference type="Proteomes" id="UP000002101">
    <property type="component" value="Genome"/>
</dbReference>
<dbReference type="GO" id="GO:0030430">
    <property type="term" value="C:host cell cytoplasm"/>
    <property type="evidence" value="ECO:0007669"/>
    <property type="project" value="UniProtKB-SubCell"/>
</dbReference>
<dbReference type="GO" id="GO:0039615">
    <property type="term" value="C:T=1 icosahedral viral capsid"/>
    <property type="evidence" value="ECO:0007669"/>
    <property type="project" value="UniProtKB-KW"/>
</dbReference>
<dbReference type="GO" id="GO:0005198">
    <property type="term" value="F:structural molecule activity"/>
    <property type="evidence" value="ECO:0007669"/>
    <property type="project" value="InterPro"/>
</dbReference>
<dbReference type="Gene3D" id="2.60.169.10">
    <property type="entry name" value="Microviridae F protein"/>
    <property type="match status" value="2"/>
</dbReference>
<dbReference type="InterPro" id="IPR016184">
    <property type="entry name" value="Capsid/spike_ssDNA_virus"/>
</dbReference>
<dbReference type="InterPro" id="IPR003514">
    <property type="entry name" value="Microviridae_protein_F"/>
</dbReference>
<dbReference type="InterPro" id="IPR037002">
    <property type="entry name" value="Microviridae_protein_F_sf"/>
</dbReference>
<dbReference type="Pfam" id="PF02305">
    <property type="entry name" value="Phage_F"/>
    <property type="match status" value="1"/>
</dbReference>
<dbReference type="SUPFAM" id="SSF88645">
    <property type="entry name" value="ssDNA viruses"/>
    <property type="match status" value="1"/>
</dbReference>
<reference key="1">
    <citation type="journal article" date="1987" name="J. Bacteriol.">
        <title>Spiroplasma virus 4: nucleotide sequence of the viral DNA, regulatory signals, and proposed genome organization.</title>
        <authorList>
            <person name="Renaudin J."/>
            <person name="Pascarel M.-C."/>
            <person name="Bove J.-M."/>
        </authorList>
    </citation>
    <scope>NUCLEOTIDE SEQUENCE [GENOMIC DNA]</scope>
</reference>
<reference key="2">
    <citation type="journal article" date="1998" name="Structure">
        <title>Structural analysis of the Spiroplasma virus, SpV4: implications for evolutionary variation to obtain host diversity among the Microviridae.</title>
        <authorList>
            <person name="Chipman P.R."/>
            <person name="Agbandje-Mckenna M."/>
            <person name="Renaudin J."/>
            <person name="Baker T.S."/>
            <person name="McKenna R."/>
        </authorList>
    </citation>
    <scope>X-RAY CRYSTALLOGRAPHY (27 ANGSTROMS) OF 226-296</scope>
</reference>
<organismHost>
    <name type="scientific">Spiroplasma melliferum</name>
    <dbReference type="NCBI Taxonomy" id="2134"/>
</organismHost>
<evidence type="ECO:0000250" key="1"/>
<evidence type="ECO:0000305" key="2"/>